<evidence type="ECO:0000305" key="1"/>
<protein>
    <recommendedName>
        <fullName>Uncharacterized 10.4 kDa protein in GpA 5'region</fullName>
    </recommendedName>
</protein>
<keyword id="KW-1185">Reference proteome</keyword>
<gene>
    <name type="primary">CP83</name>
</gene>
<accession>P41061</accession>
<organism>
    <name type="scientific">Escherichia phage 186</name>
    <name type="common">Bacteriophage 186</name>
    <dbReference type="NCBI Taxonomy" id="29252"/>
    <lineage>
        <taxon>Viruses</taxon>
        <taxon>Duplodnaviria</taxon>
        <taxon>Heunggongvirae</taxon>
        <taxon>Uroviricota</taxon>
        <taxon>Caudoviricetes</taxon>
        <taxon>Peduoviridae</taxon>
        <taxon>Eganvirus</taxon>
    </lineage>
</organism>
<proteinExistence type="predicted"/>
<name>CP83_BP186</name>
<feature type="chain" id="PRO_0000165303" description="Uncharacterized 10.4 kDa protein in GpA 5'region">
    <location>
        <begin position="1"/>
        <end position="91"/>
    </location>
</feature>
<comment type="similarity">
    <text evidence="1">To phage P2 ORF83.</text>
</comment>
<dbReference type="EMBL" id="U32222">
    <property type="protein sequence ID" value="AAC34184.1"/>
    <property type="molecule type" value="Genomic_DNA"/>
</dbReference>
<dbReference type="PIR" id="S10630">
    <property type="entry name" value="S10630"/>
</dbReference>
<dbReference type="RefSeq" id="NP_052287.1">
    <property type="nucleotide sequence ID" value="NC_001317.1"/>
</dbReference>
<dbReference type="KEGG" id="vg:1262456"/>
<dbReference type="OrthoDB" id="18299at10239"/>
<dbReference type="Proteomes" id="UP000000369">
    <property type="component" value="Segment"/>
</dbReference>
<dbReference type="InterPro" id="IPR035404">
    <property type="entry name" value="DUF5405"/>
</dbReference>
<dbReference type="Pfam" id="PF17399">
    <property type="entry name" value="DUF5405"/>
    <property type="match status" value="1"/>
</dbReference>
<reference key="1">
    <citation type="journal article" date="1990" name="J. Mol. Biol.">
        <title>DNA replication studies with coliphage 186. III. A single phage gene is required for phage 186 replication.</title>
        <authorList>
            <person name="Sivaprasad A.V."/>
            <person name="Jarvinen R."/>
            <person name="Puspurs A."/>
            <person name="Egan J.B."/>
        </authorList>
    </citation>
    <scope>NUCLEOTIDE SEQUENCE [GENOMIC DNA]</scope>
    <source>
        <strain>186CITSP</strain>
    </source>
</reference>
<sequence>MSIRIEIGDKWVITSDQYQFILNEKKVVKTGNKAGEEWLDTIGYYPKINQLISGLVHHHIHTAMIISLSAMAEEIEKLSFICEEAFKAVKK</sequence>
<organismHost>
    <name type="scientific">Escherichia coli</name>
    <dbReference type="NCBI Taxonomy" id="562"/>
</organismHost>